<sequence>MKDQKVIVALDYDNQADALTFVDKIDPSSCRLKVGKEMFTLFGPEFVKELHKRGFSVFLDLKFHDIPNTCSKAVRAAAEMGVWMVNVHASGGERMMSASREILEPYGSDRPLLIGVTVLTSMEQQDLAGIGLDIAPQEQVKRLAALTKNSGLDGVVCSAQEASMLKADLGKEFQLVTPGIRPAGADVGDQKRIMTPVDAITAGSDYLVIGRPITQAENPSQVLNEINLSLASVL</sequence>
<keyword id="KW-0210">Decarboxylase</keyword>
<keyword id="KW-0456">Lyase</keyword>
<keyword id="KW-0665">Pyrimidine biosynthesis</keyword>
<reference key="1">
    <citation type="submission" date="2008-08" db="EMBL/GenBank/DDBJ databases">
        <title>Complete sequence of Vibrio fischeri strain MJ11.</title>
        <authorList>
            <person name="Mandel M.J."/>
            <person name="Stabb E.V."/>
            <person name="Ruby E.G."/>
            <person name="Ferriera S."/>
            <person name="Johnson J."/>
            <person name="Kravitz S."/>
            <person name="Beeson K."/>
            <person name="Sutton G."/>
            <person name="Rogers Y.-H."/>
            <person name="Friedman R."/>
            <person name="Frazier M."/>
            <person name="Venter J.C."/>
        </authorList>
    </citation>
    <scope>NUCLEOTIDE SEQUENCE [LARGE SCALE GENOMIC DNA]</scope>
    <source>
        <strain>MJ11</strain>
    </source>
</reference>
<protein>
    <recommendedName>
        <fullName evidence="1">Orotidine 5'-phosphate decarboxylase</fullName>
        <ecNumber evidence="1">4.1.1.23</ecNumber>
    </recommendedName>
    <alternativeName>
        <fullName evidence="1">OMP decarboxylase</fullName>
        <shortName evidence="1">OMPDCase</shortName>
        <shortName evidence="1">OMPdecase</shortName>
    </alternativeName>
</protein>
<proteinExistence type="inferred from homology"/>
<accession>B5FG54</accession>
<dbReference type="EC" id="4.1.1.23" evidence="1"/>
<dbReference type="EMBL" id="CP001139">
    <property type="protein sequence ID" value="ACH66326.1"/>
    <property type="molecule type" value="Genomic_DNA"/>
</dbReference>
<dbReference type="RefSeq" id="WP_005420156.1">
    <property type="nucleotide sequence ID" value="NC_011184.1"/>
</dbReference>
<dbReference type="SMR" id="B5FG54"/>
<dbReference type="GeneID" id="54164454"/>
<dbReference type="KEGG" id="vfm:VFMJ11_1882"/>
<dbReference type="HOGENOM" id="CLU_067069_0_0_6"/>
<dbReference type="UniPathway" id="UPA00070">
    <property type="reaction ID" value="UER00120"/>
</dbReference>
<dbReference type="Proteomes" id="UP000001857">
    <property type="component" value="Chromosome I"/>
</dbReference>
<dbReference type="GO" id="GO:0005829">
    <property type="term" value="C:cytosol"/>
    <property type="evidence" value="ECO:0007669"/>
    <property type="project" value="TreeGrafter"/>
</dbReference>
<dbReference type="GO" id="GO:0004590">
    <property type="term" value="F:orotidine-5'-phosphate decarboxylase activity"/>
    <property type="evidence" value="ECO:0007669"/>
    <property type="project" value="UniProtKB-UniRule"/>
</dbReference>
<dbReference type="GO" id="GO:0006207">
    <property type="term" value="P:'de novo' pyrimidine nucleobase biosynthetic process"/>
    <property type="evidence" value="ECO:0007669"/>
    <property type="project" value="InterPro"/>
</dbReference>
<dbReference type="GO" id="GO:0044205">
    <property type="term" value="P:'de novo' UMP biosynthetic process"/>
    <property type="evidence" value="ECO:0007669"/>
    <property type="project" value="UniProtKB-UniRule"/>
</dbReference>
<dbReference type="CDD" id="cd04725">
    <property type="entry name" value="OMP_decarboxylase_like"/>
    <property type="match status" value="1"/>
</dbReference>
<dbReference type="FunFam" id="3.20.20.70:FF:000015">
    <property type="entry name" value="Orotidine 5'-phosphate decarboxylase"/>
    <property type="match status" value="1"/>
</dbReference>
<dbReference type="Gene3D" id="3.20.20.70">
    <property type="entry name" value="Aldolase class I"/>
    <property type="match status" value="1"/>
</dbReference>
<dbReference type="HAMAP" id="MF_01200_B">
    <property type="entry name" value="OMPdecase_type1_B"/>
    <property type="match status" value="1"/>
</dbReference>
<dbReference type="InterPro" id="IPR013785">
    <property type="entry name" value="Aldolase_TIM"/>
</dbReference>
<dbReference type="InterPro" id="IPR014732">
    <property type="entry name" value="OMPdecase"/>
</dbReference>
<dbReference type="InterPro" id="IPR018089">
    <property type="entry name" value="OMPdecase_AS"/>
</dbReference>
<dbReference type="InterPro" id="IPR047596">
    <property type="entry name" value="OMPdecase_bac"/>
</dbReference>
<dbReference type="InterPro" id="IPR001754">
    <property type="entry name" value="OMPdeCOase_dom"/>
</dbReference>
<dbReference type="InterPro" id="IPR011060">
    <property type="entry name" value="RibuloseP-bd_barrel"/>
</dbReference>
<dbReference type="NCBIfam" id="NF001273">
    <property type="entry name" value="PRK00230.1"/>
    <property type="match status" value="1"/>
</dbReference>
<dbReference type="NCBIfam" id="TIGR01740">
    <property type="entry name" value="pyrF"/>
    <property type="match status" value="1"/>
</dbReference>
<dbReference type="PANTHER" id="PTHR32119">
    <property type="entry name" value="OROTIDINE 5'-PHOSPHATE DECARBOXYLASE"/>
    <property type="match status" value="1"/>
</dbReference>
<dbReference type="PANTHER" id="PTHR32119:SF2">
    <property type="entry name" value="OROTIDINE 5'-PHOSPHATE DECARBOXYLASE"/>
    <property type="match status" value="1"/>
</dbReference>
<dbReference type="Pfam" id="PF00215">
    <property type="entry name" value="OMPdecase"/>
    <property type="match status" value="1"/>
</dbReference>
<dbReference type="SMART" id="SM00934">
    <property type="entry name" value="OMPdecase"/>
    <property type="match status" value="1"/>
</dbReference>
<dbReference type="SUPFAM" id="SSF51366">
    <property type="entry name" value="Ribulose-phoshate binding barrel"/>
    <property type="match status" value="1"/>
</dbReference>
<dbReference type="PROSITE" id="PS00156">
    <property type="entry name" value="OMPDECASE"/>
    <property type="match status" value="1"/>
</dbReference>
<name>PYRF_ALIFM</name>
<evidence type="ECO:0000255" key="1">
    <source>
        <dbReference type="HAMAP-Rule" id="MF_01200"/>
    </source>
</evidence>
<gene>
    <name evidence="1" type="primary">pyrF</name>
    <name type="ordered locus">VFMJ11_1882</name>
</gene>
<feature type="chain" id="PRO_1000138568" description="Orotidine 5'-phosphate decarboxylase">
    <location>
        <begin position="1"/>
        <end position="234"/>
    </location>
</feature>
<feature type="active site" description="Proton donor" evidence="1">
    <location>
        <position position="62"/>
    </location>
</feature>
<feature type="binding site" evidence="1">
    <location>
        <position position="11"/>
    </location>
    <ligand>
        <name>substrate</name>
    </ligand>
</feature>
<feature type="binding site" evidence="1">
    <location>
        <position position="33"/>
    </location>
    <ligand>
        <name>substrate</name>
    </ligand>
</feature>
<feature type="binding site" evidence="1">
    <location>
        <begin position="60"/>
        <end position="69"/>
    </location>
    <ligand>
        <name>substrate</name>
    </ligand>
</feature>
<feature type="binding site" evidence="1">
    <location>
        <position position="120"/>
    </location>
    <ligand>
        <name>substrate</name>
    </ligand>
</feature>
<feature type="binding site" evidence="1">
    <location>
        <position position="181"/>
    </location>
    <ligand>
        <name>substrate</name>
    </ligand>
</feature>
<feature type="binding site" evidence="1">
    <location>
        <position position="190"/>
    </location>
    <ligand>
        <name>substrate</name>
    </ligand>
</feature>
<feature type="binding site" evidence="1">
    <location>
        <position position="210"/>
    </location>
    <ligand>
        <name>substrate</name>
    </ligand>
</feature>
<feature type="binding site" evidence="1">
    <location>
        <position position="211"/>
    </location>
    <ligand>
        <name>substrate</name>
    </ligand>
</feature>
<comment type="function">
    <text evidence="1">Catalyzes the decarboxylation of orotidine 5'-monophosphate (OMP) to uridine 5'-monophosphate (UMP).</text>
</comment>
<comment type="catalytic activity">
    <reaction evidence="1">
        <text>orotidine 5'-phosphate + H(+) = UMP + CO2</text>
        <dbReference type="Rhea" id="RHEA:11596"/>
        <dbReference type="ChEBI" id="CHEBI:15378"/>
        <dbReference type="ChEBI" id="CHEBI:16526"/>
        <dbReference type="ChEBI" id="CHEBI:57538"/>
        <dbReference type="ChEBI" id="CHEBI:57865"/>
        <dbReference type="EC" id="4.1.1.23"/>
    </reaction>
</comment>
<comment type="pathway">
    <text evidence="1">Pyrimidine metabolism; UMP biosynthesis via de novo pathway; UMP from orotate: step 2/2.</text>
</comment>
<comment type="subunit">
    <text evidence="1">Homodimer.</text>
</comment>
<comment type="similarity">
    <text evidence="1">Belongs to the OMP decarboxylase family. Type 1 subfamily.</text>
</comment>
<organism>
    <name type="scientific">Aliivibrio fischeri (strain MJ11)</name>
    <name type="common">Vibrio fischeri</name>
    <dbReference type="NCBI Taxonomy" id="388396"/>
    <lineage>
        <taxon>Bacteria</taxon>
        <taxon>Pseudomonadati</taxon>
        <taxon>Pseudomonadota</taxon>
        <taxon>Gammaproteobacteria</taxon>
        <taxon>Vibrionales</taxon>
        <taxon>Vibrionaceae</taxon>
        <taxon>Aliivibrio</taxon>
    </lineage>
</organism>